<evidence type="ECO:0000250" key="1"/>
<evidence type="ECO:0000305" key="2"/>
<proteinExistence type="evidence at transcript level"/>
<dbReference type="EC" id="1.14.-.-"/>
<dbReference type="EMBL" id="AE014296">
    <property type="protein sequence ID" value="AAF49108.1"/>
    <property type="molecule type" value="Genomic_DNA"/>
</dbReference>
<dbReference type="EMBL" id="AY051626">
    <property type="protein sequence ID" value="AAK93050.1"/>
    <property type="molecule type" value="mRNA"/>
</dbReference>
<dbReference type="RefSeq" id="NP_649151.1">
    <property type="nucleotide sequence ID" value="NM_140894.3"/>
</dbReference>
<dbReference type="SMR" id="Q9VW43"/>
<dbReference type="FunCoup" id="Q9VW43">
    <property type="interactions" value="21"/>
</dbReference>
<dbReference type="STRING" id="7227.FBpp0074694"/>
<dbReference type="PaxDb" id="7227-FBpp0074694"/>
<dbReference type="DNASU" id="40161"/>
<dbReference type="EnsemblMetazoa" id="FBtr0074925">
    <property type="protein sequence ID" value="FBpp0074694"/>
    <property type="gene ID" value="FBgn0036910"/>
</dbReference>
<dbReference type="GeneID" id="40161"/>
<dbReference type="KEGG" id="dme:Dmel_CG8733"/>
<dbReference type="UCSC" id="CG8733-RA">
    <property type="organism name" value="d. melanogaster"/>
</dbReference>
<dbReference type="AGR" id="FB:FBgn0036910"/>
<dbReference type="CTD" id="40161"/>
<dbReference type="FlyBase" id="FBgn0036910">
    <property type="gene designation" value="Cyp305a1"/>
</dbReference>
<dbReference type="VEuPathDB" id="VectorBase:FBgn0036910"/>
<dbReference type="eggNOG" id="KOG0156">
    <property type="taxonomic scope" value="Eukaryota"/>
</dbReference>
<dbReference type="GeneTree" id="ENSGT00940000167305"/>
<dbReference type="HOGENOM" id="CLU_001570_22_0_1"/>
<dbReference type="InParanoid" id="Q9VW43"/>
<dbReference type="OMA" id="WCLIAGE"/>
<dbReference type="OrthoDB" id="3934656at2759"/>
<dbReference type="PhylomeDB" id="Q9VW43"/>
<dbReference type="BioGRID-ORCS" id="40161">
    <property type="hits" value="0 hits in 1 CRISPR screen"/>
</dbReference>
<dbReference type="GenomeRNAi" id="40161"/>
<dbReference type="PRO" id="PR:Q9VW43"/>
<dbReference type="Proteomes" id="UP000000803">
    <property type="component" value="Chromosome 3L"/>
</dbReference>
<dbReference type="Bgee" id="FBgn0036910">
    <property type="expression patterns" value="Expressed in adult enteroendocrine precursor cell in adult midgut (Drosophila) and 66 other cell types or tissues"/>
</dbReference>
<dbReference type="GO" id="GO:0005789">
    <property type="term" value="C:endoplasmic reticulum membrane"/>
    <property type="evidence" value="ECO:0007669"/>
    <property type="project" value="UniProtKB-SubCell"/>
</dbReference>
<dbReference type="GO" id="GO:0020037">
    <property type="term" value="F:heme binding"/>
    <property type="evidence" value="ECO:0007669"/>
    <property type="project" value="InterPro"/>
</dbReference>
<dbReference type="GO" id="GO:0005506">
    <property type="term" value="F:iron ion binding"/>
    <property type="evidence" value="ECO:0007669"/>
    <property type="project" value="InterPro"/>
</dbReference>
<dbReference type="GO" id="GO:0004497">
    <property type="term" value="F:monooxygenase activity"/>
    <property type="evidence" value="ECO:0007669"/>
    <property type="project" value="UniProtKB-KW"/>
</dbReference>
<dbReference type="GO" id="GO:0016705">
    <property type="term" value="F:oxidoreductase activity, acting on paired donors, with incorporation or reduction of molecular oxygen"/>
    <property type="evidence" value="ECO:0007669"/>
    <property type="project" value="InterPro"/>
</dbReference>
<dbReference type="CDD" id="cd20651">
    <property type="entry name" value="CYP15A1-like"/>
    <property type="match status" value="1"/>
</dbReference>
<dbReference type="FunFam" id="1.10.630.10:FF:000238">
    <property type="entry name" value="Cytochrome P450 2A6"/>
    <property type="match status" value="1"/>
</dbReference>
<dbReference type="Gene3D" id="1.10.630.10">
    <property type="entry name" value="Cytochrome P450"/>
    <property type="match status" value="1"/>
</dbReference>
<dbReference type="InterPro" id="IPR001128">
    <property type="entry name" value="Cyt_P450"/>
</dbReference>
<dbReference type="InterPro" id="IPR017972">
    <property type="entry name" value="Cyt_P450_CS"/>
</dbReference>
<dbReference type="InterPro" id="IPR002401">
    <property type="entry name" value="Cyt_P450_E_grp-I"/>
</dbReference>
<dbReference type="InterPro" id="IPR036396">
    <property type="entry name" value="Cyt_P450_sf"/>
</dbReference>
<dbReference type="InterPro" id="IPR050182">
    <property type="entry name" value="Cytochrome_P450_fam2"/>
</dbReference>
<dbReference type="PANTHER" id="PTHR24300:SF376">
    <property type="entry name" value="CYTOCHROME P450 15A1"/>
    <property type="match status" value="1"/>
</dbReference>
<dbReference type="PANTHER" id="PTHR24300">
    <property type="entry name" value="CYTOCHROME P450 508A4-RELATED"/>
    <property type="match status" value="1"/>
</dbReference>
<dbReference type="Pfam" id="PF00067">
    <property type="entry name" value="p450"/>
    <property type="match status" value="1"/>
</dbReference>
<dbReference type="PRINTS" id="PR00463">
    <property type="entry name" value="EP450I"/>
</dbReference>
<dbReference type="PRINTS" id="PR00385">
    <property type="entry name" value="P450"/>
</dbReference>
<dbReference type="SUPFAM" id="SSF48264">
    <property type="entry name" value="Cytochrome P450"/>
    <property type="match status" value="1"/>
</dbReference>
<dbReference type="PROSITE" id="PS00086">
    <property type="entry name" value="CYTOCHROME_P450"/>
    <property type="match status" value="1"/>
</dbReference>
<reference key="1">
    <citation type="journal article" date="2000" name="Science">
        <title>The genome sequence of Drosophila melanogaster.</title>
        <authorList>
            <person name="Adams M.D."/>
            <person name="Celniker S.E."/>
            <person name="Holt R.A."/>
            <person name="Evans C.A."/>
            <person name="Gocayne J.D."/>
            <person name="Amanatides P.G."/>
            <person name="Scherer S.E."/>
            <person name="Li P.W."/>
            <person name="Hoskins R.A."/>
            <person name="Galle R.F."/>
            <person name="George R.A."/>
            <person name="Lewis S.E."/>
            <person name="Richards S."/>
            <person name="Ashburner M."/>
            <person name="Henderson S.N."/>
            <person name="Sutton G.G."/>
            <person name="Wortman J.R."/>
            <person name="Yandell M.D."/>
            <person name="Zhang Q."/>
            <person name="Chen L.X."/>
            <person name="Brandon R.C."/>
            <person name="Rogers Y.-H.C."/>
            <person name="Blazej R.G."/>
            <person name="Champe M."/>
            <person name="Pfeiffer B.D."/>
            <person name="Wan K.H."/>
            <person name="Doyle C."/>
            <person name="Baxter E.G."/>
            <person name="Helt G."/>
            <person name="Nelson C.R."/>
            <person name="Miklos G.L.G."/>
            <person name="Abril J.F."/>
            <person name="Agbayani A."/>
            <person name="An H.-J."/>
            <person name="Andrews-Pfannkoch C."/>
            <person name="Baldwin D."/>
            <person name="Ballew R.M."/>
            <person name="Basu A."/>
            <person name="Baxendale J."/>
            <person name="Bayraktaroglu L."/>
            <person name="Beasley E.M."/>
            <person name="Beeson K.Y."/>
            <person name="Benos P.V."/>
            <person name="Berman B.P."/>
            <person name="Bhandari D."/>
            <person name="Bolshakov S."/>
            <person name="Borkova D."/>
            <person name="Botchan M.R."/>
            <person name="Bouck J."/>
            <person name="Brokstein P."/>
            <person name="Brottier P."/>
            <person name="Burtis K.C."/>
            <person name="Busam D.A."/>
            <person name="Butler H."/>
            <person name="Cadieu E."/>
            <person name="Center A."/>
            <person name="Chandra I."/>
            <person name="Cherry J.M."/>
            <person name="Cawley S."/>
            <person name="Dahlke C."/>
            <person name="Davenport L.B."/>
            <person name="Davies P."/>
            <person name="de Pablos B."/>
            <person name="Delcher A."/>
            <person name="Deng Z."/>
            <person name="Mays A.D."/>
            <person name="Dew I."/>
            <person name="Dietz S.M."/>
            <person name="Dodson K."/>
            <person name="Doup L.E."/>
            <person name="Downes M."/>
            <person name="Dugan-Rocha S."/>
            <person name="Dunkov B.C."/>
            <person name="Dunn P."/>
            <person name="Durbin K.J."/>
            <person name="Evangelista C.C."/>
            <person name="Ferraz C."/>
            <person name="Ferriera S."/>
            <person name="Fleischmann W."/>
            <person name="Fosler C."/>
            <person name="Gabrielian A.E."/>
            <person name="Garg N.S."/>
            <person name="Gelbart W.M."/>
            <person name="Glasser K."/>
            <person name="Glodek A."/>
            <person name="Gong F."/>
            <person name="Gorrell J.H."/>
            <person name="Gu Z."/>
            <person name="Guan P."/>
            <person name="Harris M."/>
            <person name="Harris N.L."/>
            <person name="Harvey D.A."/>
            <person name="Heiman T.J."/>
            <person name="Hernandez J.R."/>
            <person name="Houck J."/>
            <person name="Hostin D."/>
            <person name="Houston K.A."/>
            <person name="Howland T.J."/>
            <person name="Wei M.-H."/>
            <person name="Ibegwam C."/>
            <person name="Jalali M."/>
            <person name="Kalush F."/>
            <person name="Karpen G.H."/>
            <person name="Ke Z."/>
            <person name="Kennison J.A."/>
            <person name="Ketchum K.A."/>
            <person name="Kimmel B.E."/>
            <person name="Kodira C.D."/>
            <person name="Kraft C.L."/>
            <person name="Kravitz S."/>
            <person name="Kulp D."/>
            <person name="Lai Z."/>
            <person name="Lasko P."/>
            <person name="Lei Y."/>
            <person name="Levitsky A.A."/>
            <person name="Li J.H."/>
            <person name="Li Z."/>
            <person name="Liang Y."/>
            <person name="Lin X."/>
            <person name="Liu X."/>
            <person name="Mattei B."/>
            <person name="McIntosh T.C."/>
            <person name="McLeod M.P."/>
            <person name="McPherson D."/>
            <person name="Merkulov G."/>
            <person name="Milshina N.V."/>
            <person name="Mobarry C."/>
            <person name="Morris J."/>
            <person name="Moshrefi A."/>
            <person name="Mount S.M."/>
            <person name="Moy M."/>
            <person name="Murphy B."/>
            <person name="Murphy L."/>
            <person name="Muzny D.M."/>
            <person name="Nelson D.L."/>
            <person name="Nelson D.R."/>
            <person name="Nelson K.A."/>
            <person name="Nixon K."/>
            <person name="Nusskern D.R."/>
            <person name="Pacleb J.M."/>
            <person name="Palazzolo M."/>
            <person name="Pittman G.S."/>
            <person name="Pan S."/>
            <person name="Pollard J."/>
            <person name="Puri V."/>
            <person name="Reese M.G."/>
            <person name="Reinert K."/>
            <person name="Remington K."/>
            <person name="Saunders R.D.C."/>
            <person name="Scheeler F."/>
            <person name="Shen H."/>
            <person name="Shue B.C."/>
            <person name="Siden-Kiamos I."/>
            <person name="Simpson M."/>
            <person name="Skupski M.P."/>
            <person name="Smith T.J."/>
            <person name="Spier E."/>
            <person name="Spradling A.C."/>
            <person name="Stapleton M."/>
            <person name="Strong R."/>
            <person name="Sun E."/>
            <person name="Svirskas R."/>
            <person name="Tector C."/>
            <person name="Turner R."/>
            <person name="Venter E."/>
            <person name="Wang A.H."/>
            <person name="Wang X."/>
            <person name="Wang Z.-Y."/>
            <person name="Wassarman D.A."/>
            <person name="Weinstock G.M."/>
            <person name="Weissenbach J."/>
            <person name="Williams S.M."/>
            <person name="Woodage T."/>
            <person name="Worley K.C."/>
            <person name="Wu D."/>
            <person name="Yang S."/>
            <person name="Yao Q.A."/>
            <person name="Ye J."/>
            <person name="Yeh R.-F."/>
            <person name="Zaveri J.S."/>
            <person name="Zhan M."/>
            <person name="Zhang G."/>
            <person name="Zhao Q."/>
            <person name="Zheng L."/>
            <person name="Zheng X.H."/>
            <person name="Zhong F.N."/>
            <person name="Zhong W."/>
            <person name="Zhou X."/>
            <person name="Zhu S.C."/>
            <person name="Zhu X."/>
            <person name="Smith H.O."/>
            <person name="Gibbs R.A."/>
            <person name="Myers E.W."/>
            <person name="Rubin G.M."/>
            <person name="Venter J.C."/>
        </authorList>
    </citation>
    <scope>NUCLEOTIDE SEQUENCE [LARGE SCALE GENOMIC DNA]</scope>
    <source>
        <strain>Berkeley</strain>
    </source>
</reference>
<reference key="2">
    <citation type="journal article" date="2002" name="Genome Biol.">
        <title>Annotation of the Drosophila melanogaster euchromatic genome: a systematic review.</title>
        <authorList>
            <person name="Misra S."/>
            <person name="Crosby M.A."/>
            <person name="Mungall C.J."/>
            <person name="Matthews B.B."/>
            <person name="Campbell K.S."/>
            <person name="Hradecky P."/>
            <person name="Huang Y."/>
            <person name="Kaminker J.S."/>
            <person name="Millburn G.H."/>
            <person name="Prochnik S.E."/>
            <person name="Smith C.D."/>
            <person name="Tupy J.L."/>
            <person name="Whitfield E.J."/>
            <person name="Bayraktaroglu L."/>
            <person name="Berman B.P."/>
            <person name="Bettencourt B.R."/>
            <person name="Celniker S.E."/>
            <person name="de Grey A.D.N.J."/>
            <person name="Drysdale R.A."/>
            <person name="Harris N.L."/>
            <person name="Richter J."/>
            <person name="Russo S."/>
            <person name="Schroeder A.J."/>
            <person name="Shu S.Q."/>
            <person name="Stapleton M."/>
            <person name="Yamada C."/>
            <person name="Ashburner M."/>
            <person name="Gelbart W.M."/>
            <person name="Rubin G.M."/>
            <person name="Lewis S.E."/>
        </authorList>
    </citation>
    <scope>GENOME REANNOTATION</scope>
    <source>
        <strain>Berkeley</strain>
    </source>
</reference>
<reference key="3">
    <citation type="journal article" date="2002" name="Genome Biol.">
        <title>A Drosophila full-length cDNA resource.</title>
        <authorList>
            <person name="Stapleton M."/>
            <person name="Carlson J.W."/>
            <person name="Brokstein P."/>
            <person name="Yu C."/>
            <person name="Champe M."/>
            <person name="George R.A."/>
            <person name="Guarin H."/>
            <person name="Kronmiller B."/>
            <person name="Pacleb J.M."/>
            <person name="Park S."/>
            <person name="Wan K.H."/>
            <person name="Rubin G.M."/>
            <person name="Celniker S.E."/>
        </authorList>
    </citation>
    <scope>NUCLEOTIDE SEQUENCE [LARGE SCALE MRNA]</scope>
    <source>
        <strain>Berkeley</strain>
        <tissue>Head</tissue>
    </source>
</reference>
<keyword id="KW-0256">Endoplasmic reticulum</keyword>
<keyword id="KW-0349">Heme</keyword>
<keyword id="KW-0408">Iron</keyword>
<keyword id="KW-0472">Membrane</keyword>
<keyword id="KW-0479">Metal-binding</keyword>
<keyword id="KW-0492">Microsome</keyword>
<keyword id="KW-0503">Monooxygenase</keyword>
<keyword id="KW-0560">Oxidoreductase</keyword>
<keyword id="KW-1185">Reference proteome</keyword>
<sequence>MSALIFLCAILIGFVIYSLISSARRPKNFPPGPRFVPWLGNTLQFRKEASAVGGQHILFERWAKDFRSDLVGLKLGREYVVVALGHEMVKEVQLQEVFEGRPDNFFLRLRTMGTRKGITCTDGQLWYEHRHFAMKQMRNVGYGRSQMEHHIELEAEELLGQLERTEEQPIEPVTWLAQSVLNVLWCLIAGKRIARQEDGTLRRLLDLMNRRSKLFDICGGLLAQFPWLRHVAPDRTGYNLIQQLNTELYGFFMDTIEEHRRQLAKDPSPAESDLIYAYLQEMKDRSAGGESSTFNETQLVMTILDFFIAGSQTTSNTINLALMVLAMRPDVQEKLFSQVTASVAAASTDAFPHLSRREAFDYMDAFIMEVQRFFHITPITGPRRALWATKLGGYDIPKNATILISLRSVHLDKEHWKDPLEFRPERFIDSAGKCFKDEYFMPFGMGRRRCLGDALARACIFSFLVRIVQHFSVVLPAGESPSMVLLPGITLTPKPYKVQFVKRT</sequence>
<comment type="function">
    <text evidence="1">May be involved in the metabolism of insect hormones and in the breakdown of synthetic insecticides.</text>
</comment>
<comment type="cofactor">
    <cofactor evidence="1">
        <name>heme</name>
        <dbReference type="ChEBI" id="CHEBI:30413"/>
    </cofactor>
</comment>
<comment type="subcellular location">
    <subcellularLocation>
        <location evidence="2">Endoplasmic reticulum membrane</location>
        <topology evidence="2">Peripheral membrane protein</topology>
    </subcellularLocation>
    <subcellularLocation>
        <location evidence="2">Microsome membrane</location>
        <topology evidence="2">Peripheral membrane protein</topology>
    </subcellularLocation>
</comment>
<comment type="similarity">
    <text evidence="2">Belongs to the cytochrome P450 family.</text>
</comment>
<organism>
    <name type="scientific">Drosophila melanogaster</name>
    <name type="common">Fruit fly</name>
    <dbReference type="NCBI Taxonomy" id="7227"/>
    <lineage>
        <taxon>Eukaryota</taxon>
        <taxon>Metazoa</taxon>
        <taxon>Ecdysozoa</taxon>
        <taxon>Arthropoda</taxon>
        <taxon>Hexapoda</taxon>
        <taxon>Insecta</taxon>
        <taxon>Pterygota</taxon>
        <taxon>Neoptera</taxon>
        <taxon>Endopterygota</taxon>
        <taxon>Diptera</taxon>
        <taxon>Brachycera</taxon>
        <taxon>Muscomorpha</taxon>
        <taxon>Ephydroidea</taxon>
        <taxon>Drosophilidae</taxon>
        <taxon>Drosophila</taxon>
        <taxon>Sophophora</taxon>
    </lineage>
</organism>
<feature type="chain" id="PRO_0000052314" description="Probable cytochrome P450 305a1">
    <location>
        <begin position="1"/>
        <end position="504"/>
    </location>
</feature>
<feature type="binding site" description="axial binding residue" evidence="1">
    <location>
        <position position="450"/>
    </location>
    <ligand>
        <name>heme</name>
        <dbReference type="ChEBI" id="CHEBI:30413"/>
    </ligand>
    <ligandPart>
        <name>Fe</name>
        <dbReference type="ChEBI" id="CHEBI:18248"/>
    </ligandPart>
</feature>
<name>CP305_DROME</name>
<gene>
    <name type="primary">Cyp305a1</name>
    <name type="ORF">CG8733</name>
</gene>
<accession>Q9VW43</accession>
<protein>
    <recommendedName>
        <fullName>Probable cytochrome P450 305a1</fullName>
        <ecNumber>1.14.-.-</ecNumber>
    </recommendedName>
    <alternativeName>
        <fullName>CYPCCCVA1</fullName>
    </alternativeName>
</protein>